<gene>
    <name type="ordered locus">At5g51380</name>
    <name type="ORF">MFG13.9</name>
</gene>
<reference key="1">
    <citation type="submission" date="1999-04" db="EMBL/GenBank/DDBJ databases">
        <title>Structural analysis of Arabidopsis thaliana chromosome 5. XI.</title>
        <authorList>
            <person name="Kaneko T."/>
            <person name="Katoh T."/>
            <person name="Asamizu E."/>
            <person name="Sato S."/>
            <person name="Nakamura Y."/>
            <person name="Kotani H."/>
            <person name="Tabata S."/>
        </authorList>
    </citation>
    <scope>NUCLEOTIDE SEQUENCE [LARGE SCALE GENOMIC DNA]</scope>
    <source>
        <strain>cv. Columbia</strain>
    </source>
</reference>
<reference key="2">
    <citation type="journal article" date="2017" name="Plant J.">
        <title>Araport11: a complete reannotation of the Arabidopsis thaliana reference genome.</title>
        <authorList>
            <person name="Cheng C.Y."/>
            <person name="Krishnakumar V."/>
            <person name="Chan A.P."/>
            <person name="Thibaud-Nissen F."/>
            <person name="Schobel S."/>
            <person name="Town C.D."/>
        </authorList>
    </citation>
    <scope>GENOME REANNOTATION</scope>
    <source>
        <strain>cv. Columbia</strain>
    </source>
</reference>
<reference key="3">
    <citation type="submission" date="2004-12" db="EMBL/GenBank/DDBJ databases">
        <title>Arabidopsis ORF clones.</title>
        <authorList>
            <person name="Shinn P."/>
            <person name="Chen H."/>
            <person name="Cheuk R.F."/>
            <person name="Kim C.J."/>
            <person name="Ecker J.R."/>
        </authorList>
    </citation>
    <scope>NUCLEOTIDE SEQUENCE [LARGE SCALE MRNA]</scope>
    <source>
        <strain>cv. Columbia</strain>
    </source>
</reference>
<evidence type="ECO:0000256" key="1">
    <source>
        <dbReference type="SAM" id="MobiDB-lite"/>
    </source>
</evidence>
<name>FB290_ARATH</name>
<sequence>MTFREKMPTSPKSPLRRRRSSWTGTWLNHQTTSFKQAVSAVIQAQSPRSRFKSLSSDFSDVDRTLSLSDSLLLKILEKLPESQNEDVSLVCKRWLSVQGRRLRSMKVFDWEFLLSGRLVSRFPKLTSVDLVNACFNPSSNSGILLCHTSISFHVSTDSSLNLNFVEESLLDNEMVDKGLRVLGRGSFDLIKLVVINATELGLLSLAEDCSDLQELELHKCSDNLLRGIAACENLRGLRLVGSVDGLYSSSVSDIGLTILAQGCKRLVKLELSGCEGSFDGIKAIGQCCEVLEELSICDHRMDDGWIAALSYFESLKTLLISSCRKIDSSPGPGKLLGSCPALESLQLRRCCLNDKEGMRALFKVCDGVTKVNIQDCWGLDDDSFSLAKAFRRVRFLSLEGCSILTTSGLESVILHWEELESMRVVSCKNIKDSEISAALSSLFSLLKELTWRPDTRSHLSSSLEGTGIGKRGSKFFKKR</sequence>
<accession>Q9FGN3</accession>
<dbReference type="EMBL" id="AB025621">
    <property type="protein sequence ID" value="BAB09749.1"/>
    <property type="molecule type" value="Genomic_DNA"/>
</dbReference>
<dbReference type="EMBL" id="CP002688">
    <property type="protein sequence ID" value="AED96073.1"/>
    <property type="molecule type" value="Genomic_DNA"/>
</dbReference>
<dbReference type="EMBL" id="BT020276">
    <property type="protein sequence ID" value="AAV84497.1"/>
    <property type="molecule type" value="mRNA"/>
</dbReference>
<dbReference type="EMBL" id="BT020447">
    <property type="protein sequence ID" value="AAW30025.1"/>
    <property type="molecule type" value="mRNA"/>
</dbReference>
<dbReference type="RefSeq" id="NP_199951.1">
    <property type="nucleotide sequence ID" value="NM_124517.3"/>
</dbReference>
<dbReference type="SMR" id="Q9FGN3"/>
<dbReference type="FunCoup" id="Q9FGN3">
    <property type="interactions" value="161"/>
</dbReference>
<dbReference type="STRING" id="3702.Q9FGN3"/>
<dbReference type="iPTMnet" id="Q9FGN3"/>
<dbReference type="PaxDb" id="3702-AT5G51380.1"/>
<dbReference type="ProteomicsDB" id="222461"/>
<dbReference type="EnsemblPlants" id="AT5G51380.1">
    <property type="protein sequence ID" value="AT5G51380.1"/>
    <property type="gene ID" value="AT5G51380"/>
</dbReference>
<dbReference type="GeneID" id="835212"/>
<dbReference type="Gramene" id="AT5G51380.1">
    <property type="protein sequence ID" value="AT5G51380.1"/>
    <property type="gene ID" value="AT5G51380"/>
</dbReference>
<dbReference type="KEGG" id="ath:AT5G51380"/>
<dbReference type="Araport" id="AT5G51380"/>
<dbReference type="TAIR" id="AT5G51380"/>
<dbReference type="eggNOG" id="KOG1947">
    <property type="taxonomic scope" value="Eukaryota"/>
</dbReference>
<dbReference type="HOGENOM" id="CLU_039683_0_0_1"/>
<dbReference type="InParanoid" id="Q9FGN3"/>
<dbReference type="OMA" id="HKCSDNL"/>
<dbReference type="PhylomeDB" id="Q9FGN3"/>
<dbReference type="PRO" id="PR:Q9FGN3"/>
<dbReference type="Proteomes" id="UP000006548">
    <property type="component" value="Chromosome 5"/>
</dbReference>
<dbReference type="ExpressionAtlas" id="Q9FGN3">
    <property type="expression patterns" value="baseline and differential"/>
</dbReference>
<dbReference type="FunFam" id="3.80.10.10:FF:001445">
    <property type="entry name" value="F-box protein At5g51380"/>
    <property type="match status" value="1"/>
</dbReference>
<dbReference type="Gene3D" id="3.80.10.10">
    <property type="entry name" value="Ribonuclease Inhibitor"/>
    <property type="match status" value="2"/>
</dbReference>
<dbReference type="InterPro" id="IPR036047">
    <property type="entry name" value="F-box-like_dom_sf"/>
</dbReference>
<dbReference type="InterPro" id="IPR032675">
    <property type="entry name" value="LRR_dom_sf"/>
</dbReference>
<dbReference type="PANTHER" id="PTHR13318:SF164">
    <property type="entry name" value="F-BOX DOMAIN-CONTAINING PROTEIN"/>
    <property type="match status" value="1"/>
</dbReference>
<dbReference type="PANTHER" id="PTHR13318">
    <property type="entry name" value="PARTNER OF PAIRED, ISOFORM B-RELATED"/>
    <property type="match status" value="1"/>
</dbReference>
<dbReference type="SUPFAM" id="SSF81383">
    <property type="entry name" value="F-box domain"/>
    <property type="match status" value="1"/>
</dbReference>
<dbReference type="SUPFAM" id="SSF52047">
    <property type="entry name" value="RNI-like"/>
    <property type="match status" value="1"/>
</dbReference>
<proteinExistence type="evidence at transcript level"/>
<protein>
    <recommendedName>
        <fullName>F-box protein At5g51380</fullName>
    </recommendedName>
</protein>
<feature type="chain" id="PRO_0000283556" description="F-box protein At5g51380">
    <location>
        <begin position="1"/>
        <end position="479"/>
    </location>
</feature>
<feature type="domain" description="F-box">
    <location>
        <begin position="62"/>
        <end position="108"/>
    </location>
</feature>
<feature type="region of interest" description="Disordered" evidence="1">
    <location>
        <begin position="1"/>
        <end position="20"/>
    </location>
</feature>
<organism>
    <name type="scientific">Arabidopsis thaliana</name>
    <name type="common">Mouse-ear cress</name>
    <dbReference type="NCBI Taxonomy" id="3702"/>
    <lineage>
        <taxon>Eukaryota</taxon>
        <taxon>Viridiplantae</taxon>
        <taxon>Streptophyta</taxon>
        <taxon>Embryophyta</taxon>
        <taxon>Tracheophyta</taxon>
        <taxon>Spermatophyta</taxon>
        <taxon>Magnoliopsida</taxon>
        <taxon>eudicotyledons</taxon>
        <taxon>Gunneridae</taxon>
        <taxon>Pentapetalae</taxon>
        <taxon>rosids</taxon>
        <taxon>malvids</taxon>
        <taxon>Brassicales</taxon>
        <taxon>Brassicaceae</taxon>
        <taxon>Camelineae</taxon>
        <taxon>Arabidopsis</taxon>
    </lineage>
</organism>
<keyword id="KW-1185">Reference proteome</keyword>